<feature type="chain" id="PRO_1000200305" description="Xylose isomerase">
    <location>
        <begin position="1"/>
        <end position="440"/>
    </location>
</feature>
<feature type="active site" evidence="1">
    <location>
        <position position="101"/>
    </location>
</feature>
<feature type="active site" evidence="1">
    <location>
        <position position="104"/>
    </location>
</feature>
<feature type="binding site" evidence="1">
    <location>
        <position position="232"/>
    </location>
    <ligand>
        <name>Mg(2+)</name>
        <dbReference type="ChEBI" id="CHEBI:18420"/>
        <label>1</label>
    </ligand>
</feature>
<feature type="binding site" evidence="1">
    <location>
        <position position="268"/>
    </location>
    <ligand>
        <name>Mg(2+)</name>
        <dbReference type="ChEBI" id="CHEBI:18420"/>
        <label>1</label>
    </ligand>
</feature>
<feature type="binding site" evidence="1">
    <location>
        <position position="268"/>
    </location>
    <ligand>
        <name>Mg(2+)</name>
        <dbReference type="ChEBI" id="CHEBI:18420"/>
        <label>2</label>
    </ligand>
</feature>
<feature type="binding site" evidence="1">
    <location>
        <position position="271"/>
    </location>
    <ligand>
        <name>Mg(2+)</name>
        <dbReference type="ChEBI" id="CHEBI:18420"/>
        <label>2</label>
    </ligand>
</feature>
<feature type="binding site" evidence="1">
    <location>
        <position position="296"/>
    </location>
    <ligand>
        <name>Mg(2+)</name>
        <dbReference type="ChEBI" id="CHEBI:18420"/>
        <label>1</label>
    </ligand>
</feature>
<feature type="binding site" evidence="1">
    <location>
        <position position="307"/>
    </location>
    <ligand>
        <name>Mg(2+)</name>
        <dbReference type="ChEBI" id="CHEBI:18420"/>
        <label>2</label>
    </ligand>
</feature>
<feature type="binding site" evidence="1">
    <location>
        <position position="309"/>
    </location>
    <ligand>
        <name>Mg(2+)</name>
        <dbReference type="ChEBI" id="CHEBI:18420"/>
        <label>2</label>
    </ligand>
</feature>
<feature type="binding site" evidence="1">
    <location>
        <position position="339"/>
    </location>
    <ligand>
        <name>Mg(2+)</name>
        <dbReference type="ChEBI" id="CHEBI:18420"/>
        <label>1</label>
    </ligand>
</feature>
<accession>B5R4P8</accession>
<organism>
    <name type="scientific">Salmonella enteritidis PT4 (strain P125109)</name>
    <dbReference type="NCBI Taxonomy" id="550537"/>
    <lineage>
        <taxon>Bacteria</taxon>
        <taxon>Pseudomonadati</taxon>
        <taxon>Pseudomonadota</taxon>
        <taxon>Gammaproteobacteria</taxon>
        <taxon>Enterobacterales</taxon>
        <taxon>Enterobacteriaceae</taxon>
        <taxon>Salmonella</taxon>
    </lineage>
</organism>
<sequence>MQAYFDQLDRVRYEGPQSTNPLAFRHYNPDELVLGKRMEDHLRFAACYWHTFCWNGADMFGVGAFNRPWQQPGEALELAKRKADVAFEFFHKLNVPFYCFHDVDVSPEGASLKEYKNNFAQMVDVLAAKQEQSGVKLLWGTANCFTNPRYGAGAATNPDPEVFSWAATQVVTAMNATHKLGGENYVLWGGREGYETLLNTDLRQEREQIGRFMQMVVEHKHKMGFQGTLLIEPKPQEPTKHQYDYDVATVYGFLKQFGLEKEIKVNIEANHATLAGHSFHHEIATAIALGIFGSVDANRGDAQLGWDTDQFPISVEENALVMYEILKAGGFTTGGLNFDAKVRRQSTDKYDLFYGHIGAMDTMALSLKIAARMVEDGELDKRVAKRYAGWNSELGQQILKGQLSLGELAQYAEQHNLAPVHQSGHQELLENLVNRYLFDK</sequence>
<name>XYLA_SALEP</name>
<gene>
    <name evidence="1" type="primary">xylA</name>
    <name type="ordered locus">SEN3483</name>
</gene>
<dbReference type="EC" id="5.3.1.5" evidence="1"/>
<dbReference type="EMBL" id="AM933172">
    <property type="protein sequence ID" value="CAR35062.1"/>
    <property type="molecule type" value="Genomic_DNA"/>
</dbReference>
<dbReference type="RefSeq" id="WP_001149563.1">
    <property type="nucleotide sequence ID" value="NC_011294.1"/>
</dbReference>
<dbReference type="SMR" id="B5R4P8"/>
<dbReference type="KEGG" id="set:SEN3483"/>
<dbReference type="HOGENOM" id="CLU_037261_1_0_6"/>
<dbReference type="Proteomes" id="UP000000613">
    <property type="component" value="Chromosome"/>
</dbReference>
<dbReference type="GO" id="GO:0005737">
    <property type="term" value="C:cytoplasm"/>
    <property type="evidence" value="ECO:0007669"/>
    <property type="project" value="UniProtKB-SubCell"/>
</dbReference>
<dbReference type="GO" id="GO:0000287">
    <property type="term" value="F:magnesium ion binding"/>
    <property type="evidence" value="ECO:0007669"/>
    <property type="project" value="UniProtKB-UniRule"/>
</dbReference>
<dbReference type="GO" id="GO:0009045">
    <property type="term" value="F:xylose isomerase activity"/>
    <property type="evidence" value="ECO:0007669"/>
    <property type="project" value="UniProtKB-UniRule"/>
</dbReference>
<dbReference type="GO" id="GO:0042732">
    <property type="term" value="P:D-xylose metabolic process"/>
    <property type="evidence" value="ECO:0007669"/>
    <property type="project" value="UniProtKB-UniRule"/>
</dbReference>
<dbReference type="FunFam" id="3.20.20.150:FF:000002">
    <property type="entry name" value="Xylose isomerase"/>
    <property type="match status" value="1"/>
</dbReference>
<dbReference type="Gene3D" id="3.20.20.150">
    <property type="entry name" value="Divalent-metal-dependent TIM barrel enzymes"/>
    <property type="match status" value="1"/>
</dbReference>
<dbReference type="HAMAP" id="MF_00455">
    <property type="entry name" value="Xylose_isom_A"/>
    <property type="match status" value="1"/>
</dbReference>
<dbReference type="InterPro" id="IPR036237">
    <property type="entry name" value="Xyl_isomerase-like_sf"/>
</dbReference>
<dbReference type="InterPro" id="IPR013452">
    <property type="entry name" value="Xylose_isom_bac"/>
</dbReference>
<dbReference type="InterPro" id="IPR001998">
    <property type="entry name" value="Xylose_isomerase"/>
</dbReference>
<dbReference type="NCBIfam" id="NF003998">
    <property type="entry name" value="PRK05474.1"/>
    <property type="match status" value="1"/>
</dbReference>
<dbReference type="NCBIfam" id="TIGR02630">
    <property type="entry name" value="xylose_isom_A"/>
    <property type="match status" value="1"/>
</dbReference>
<dbReference type="PANTHER" id="PTHR48408">
    <property type="match status" value="1"/>
</dbReference>
<dbReference type="PANTHER" id="PTHR48408:SF1">
    <property type="entry name" value="XYLOSE ISOMERASE"/>
    <property type="match status" value="1"/>
</dbReference>
<dbReference type="PRINTS" id="PR00688">
    <property type="entry name" value="XYLOSISMRASE"/>
</dbReference>
<dbReference type="SUPFAM" id="SSF51658">
    <property type="entry name" value="Xylose isomerase-like"/>
    <property type="match status" value="1"/>
</dbReference>
<dbReference type="PROSITE" id="PS51415">
    <property type="entry name" value="XYLOSE_ISOMERASE"/>
    <property type="match status" value="1"/>
</dbReference>
<reference key="1">
    <citation type="journal article" date="2008" name="Genome Res.">
        <title>Comparative genome analysis of Salmonella enteritidis PT4 and Salmonella gallinarum 287/91 provides insights into evolutionary and host adaptation pathways.</title>
        <authorList>
            <person name="Thomson N.R."/>
            <person name="Clayton D.J."/>
            <person name="Windhorst D."/>
            <person name="Vernikos G."/>
            <person name="Davidson S."/>
            <person name="Churcher C."/>
            <person name="Quail M.A."/>
            <person name="Stevens M."/>
            <person name="Jones M.A."/>
            <person name="Watson M."/>
            <person name="Barron A."/>
            <person name="Layton A."/>
            <person name="Pickard D."/>
            <person name="Kingsley R.A."/>
            <person name="Bignell A."/>
            <person name="Clark L."/>
            <person name="Harris B."/>
            <person name="Ormond D."/>
            <person name="Abdellah Z."/>
            <person name="Brooks K."/>
            <person name="Cherevach I."/>
            <person name="Chillingworth T."/>
            <person name="Woodward J."/>
            <person name="Norberczak H."/>
            <person name="Lord A."/>
            <person name="Arrowsmith C."/>
            <person name="Jagels K."/>
            <person name="Moule S."/>
            <person name="Mungall K."/>
            <person name="Saunders M."/>
            <person name="Whitehead S."/>
            <person name="Chabalgoity J.A."/>
            <person name="Maskell D."/>
            <person name="Humphreys T."/>
            <person name="Roberts M."/>
            <person name="Barrow P.A."/>
            <person name="Dougan G."/>
            <person name="Parkhill J."/>
        </authorList>
    </citation>
    <scope>NUCLEOTIDE SEQUENCE [LARGE SCALE GENOMIC DNA]</scope>
    <source>
        <strain>P125109</strain>
    </source>
</reference>
<evidence type="ECO:0000255" key="1">
    <source>
        <dbReference type="HAMAP-Rule" id="MF_00455"/>
    </source>
</evidence>
<keyword id="KW-0119">Carbohydrate metabolism</keyword>
<keyword id="KW-0963">Cytoplasm</keyword>
<keyword id="KW-0413">Isomerase</keyword>
<keyword id="KW-0460">Magnesium</keyword>
<keyword id="KW-0479">Metal-binding</keyword>
<keyword id="KW-0859">Xylose metabolism</keyword>
<protein>
    <recommendedName>
        <fullName evidence="1">Xylose isomerase</fullName>
        <ecNumber evidence="1">5.3.1.5</ecNumber>
    </recommendedName>
</protein>
<proteinExistence type="inferred from homology"/>
<comment type="catalytic activity">
    <reaction evidence="1">
        <text>alpha-D-xylose = alpha-D-xylulofuranose</text>
        <dbReference type="Rhea" id="RHEA:22816"/>
        <dbReference type="ChEBI" id="CHEBI:28518"/>
        <dbReference type="ChEBI" id="CHEBI:188998"/>
        <dbReference type="EC" id="5.3.1.5"/>
    </reaction>
</comment>
<comment type="cofactor">
    <cofactor evidence="1">
        <name>Mg(2+)</name>
        <dbReference type="ChEBI" id="CHEBI:18420"/>
    </cofactor>
    <text evidence="1">Binds 2 magnesium ions per subunit.</text>
</comment>
<comment type="subunit">
    <text evidence="1">Homotetramer.</text>
</comment>
<comment type="subcellular location">
    <subcellularLocation>
        <location evidence="1">Cytoplasm</location>
    </subcellularLocation>
</comment>
<comment type="similarity">
    <text evidence="1">Belongs to the xylose isomerase family.</text>
</comment>